<keyword id="KW-0687">Ribonucleoprotein</keyword>
<keyword id="KW-0689">Ribosomal protein</keyword>
<dbReference type="EMBL" id="CP000668">
    <property type="protein sequence ID" value="ABP40054.1"/>
    <property type="molecule type" value="Genomic_DNA"/>
</dbReference>
<dbReference type="RefSeq" id="WP_002221800.1">
    <property type="nucleotide sequence ID" value="NZ_CP009715.1"/>
</dbReference>
<dbReference type="SMR" id="A4TL92"/>
<dbReference type="GeneID" id="57977517"/>
<dbReference type="KEGG" id="ypp:YPDSF_1669"/>
<dbReference type="PATRIC" id="fig|386656.14.peg.2094"/>
<dbReference type="GO" id="GO:0022627">
    <property type="term" value="C:cytosolic small ribosomal subunit"/>
    <property type="evidence" value="ECO:0007669"/>
    <property type="project" value="TreeGrafter"/>
</dbReference>
<dbReference type="GO" id="GO:0003735">
    <property type="term" value="F:structural constituent of ribosome"/>
    <property type="evidence" value="ECO:0007669"/>
    <property type="project" value="InterPro"/>
</dbReference>
<dbReference type="GO" id="GO:0006412">
    <property type="term" value="P:translation"/>
    <property type="evidence" value="ECO:0007669"/>
    <property type="project" value="UniProtKB-UniRule"/>
</dbReference>
<dbReference type="CDD" id="cd01425">
    <property type="entry name" value="RPS2"/>
    <property type="match status" value="1"/>
</dbReference>
<dbReference type="FunFam" id="1.10.287.610:FF:000001">
    <property type="entry name" value="30S ribosomal protein S2"/>
    <property type="match status" value="1"/>
</dbReference>
<dbReference type="Gene3D" id="3.40.50.10490">
    <property type="entry name" value="Glucose-6-phosphate isomerase like protein, domain 1"/>
    <property type="match status" value="1"/>
</dbReference>
<dbReference type="Gene3D" id="1.10.287.610">
    <property type="entry name" value="Helix hairpin bin"/>
    <property type="match status" value="1"/>
</dbReference>
<dbReference type="HAMAP" id="MF_00291_B">
    <property type="entry name" value="Ribosomal_uS2_B"/>
    <property type="match status" value="1"/>
</dbReference>
<dbReference type="InterPro" id="IPR001865">
    <property type="entry name" value="Ribosomal_uS2"/>
</dbReference>
<dbReference type="InterPro" id="IPR005706">
    <property type="entry name" value="Ribosomal_uS2_bac/mit/plastid"/>
</dbReference>
<dbReference type="InterPro" id="IPR018130">
    <property type="entry name" value="Ribosomal_uS2_CS"/>
</dbReference>
<dbReference type="InterPro" id="IPR023591">
    <property type="entry name" value="Ribosomal_uS2_flav_dom_sf"/>
</dbReference>
<dbReference type="NCBIfam" id="TIGR01011">
    <property type="entry name" value="rpsB_bact"/>
    <property type="match status" value="1"/>
</dbReference>
<dbReference type="PANTHER" id="PTHR12534">
    <property type="entry name" value="30S RIBOSOMAL PROTEIN S2 PROKARYOTIC AND ORGANELLAR"/>
    <property type="match status" value="1"/>
</dbReference>
<dbReference type="PANTHER" id="PTHR12534:SF0">
    <property type="entry name" value="SMALL RIBOSOMAL SUBUNIT PROTEIN US2M"/>
    <property type="match status" value="1"/>
</dbReference>
<dbReference type="Pfam" id="PF00318">
    <property type="entry name" value="Ribosomal_S2"/>
    <property type="match status" value="1"/>
</dbReference>
<dbReference type="PRINTS" id="PR00395">
    <property type="entry name" value="RIBOSOMALS2"/>
</dbReference>
<dbReference type="SUPFAM" id="SSF52313">
    <property type="entry name" value="Ribosomal protein S2"/>
    <property type="match status" value="1"/>
</dbReference>
<dbReference type="PROSITE" id="PS00962">
    <property type="entry name" value="RIBOSOMAL_S2_1"/>
    <property type="match status" value="1"/>
</dbReference>
<dbReference type="PROSITE" id="PS00963">
    <property type="entry name" value="RIBOSOMAL_S2_2"/>
    <property type="match status" value="1"/>
</dbReference>
<organism>
    <name type="scientific">Yersinia pestis (strain Pestoides F)</name>
    <dbReference type="NCBI Taxonomy" id="386656"/>
    <lineage>
        <taxon>Bacteria</taxon>
        <taxon>Pseudomonadati</taxon>
        <taxon>Pseudomonadota</taxon>
        <taxon>Gammaproteobacteria</taxon>
        <taxon>Enterobacterales</taxon>
        <taxon>Yersiniaceae</taxon>
        <taxon>Yersinia</taxon>
    </lineage>
</organism>
<reference key="1">
    <citation type="submission" date="2007-02" db="EMBL/GenBank/DDBJ databases">
        <title>Complete sequence of chromosome of Yersinia pestis Pestoides F.</title>
        <authorList>
            <consortium name="US DOE Joint Genome Institute"/>
            <person name="Copeland A."/>
            <person name="Lucas S."/>
            <person name="Lapidus A."/>
            <person name="Barry K."/>
            <person name="Detter J.C."/>
            <person name="Glavina del Rio T."/>
            <person name="Hammon N."/>
            <person name="Israni S."/>
            <person name="Dalin E."/>
            <person name="Tice H."/>
            <person name="Pitluck S."/>
            <person name="Di Bartolo G."/>
            <person name="Chain P."/>
            <person name="Malfatti S."/>
            <person name="Shin M."/>
            <person name="Vergez L."/>
            <person name="Schmutz J."/>
            <person name="Larimer F."/>
            <person name="Land M."/>
            <person name="Hauser L."/>
            <person name="Worsham P."/>
            <person name="Chu M."/>
            <person name="Bearden S."/>
            <person name="Garcia E."/>
            <person name="Richardson P."/>
        </authorList>
    </citation>
    <scope>NUCLEOTIDE SEQUENCE [LARGE SCALE GENOMIC DNA]</scope>
    <source>
        <strain>Pestoides F</strain>
    </source>
</reference>
<sequence length="241" mass="26841">MATVSMRDMLQAGVHFGHQTRYWNPKMKPFIFGARNKVHIINLEKTVPMFNEALAELTKISSRKGKILFVGTKRAASEAVKEAANNCDQFFVNHRWLGGMLTNWKTVRQSIKRLKDLEIQSQDGTFDKLTKKEALMRTRELNKLENSLGGIKDMGGLPDALFVVDADHEHIAIKEANNLGIPVFSIVDTNSDPDGVDFIIPGNDDAIRAVKLYLGAVATAVREGRSQDLAVQAEESFVEAE</sequence>
<feature type="chain" id="PRO_1000004119" description="Small ribosomal subunit protein uS2">
    <location>
        <begin position="1"/>
        <end position="241"/>
    </location>
</feature>
<proteinExistence type="inferred from homology"/>
<protein>
    <recommendedName>
        <fullName evidence="1">Small ribosomal subunit protein uS2</fullName>
    </recommendedName>
    <alternativeName>
        <fullName evidence="2">30S ribosomal protein S2</fullName>
    </alternativeName>
</protein>
<comment type="similarity">
    <text evidence="1">Belongs to the universal ribosomal protein uS2 family.</text>
</comment>
<name>RS2_YERPP</name>
<gene>
    <name evidence="1" type="primary">rpsB</name>
    <name type="ordered locus">YPDSF_1669</name>
</gene>
<evidence type="ECO:0000255" key="1">
    <source>
        <dbReference type="HAMAP-Rule" id="MF_00291"/>
    </source>
</evidence>
<evidence type="ECO:0000305" key="2"/>
<accession>A4TL92</accession>